<name>NADA_ESCF3</name>
<feature type="chain" id="PRO_1000129418" description="Quinolinate synthase">
    <location>
        <begin position="1"/>
        <end position="347"/>
    </location>
</feature>
<feature type="binding site" evidence="1">
    <location>
        <position position="47"/>
    </location>
    <ligand>
        <name>iminosuccinate</name>
        <dbReference type="ChEBI" id="CHEBI:77875"/>
    </ligand>
</feature>
<feature type="binding site" evidence="1">
    <location>
        <position position="68"/>
    </location>
    <ligand>
        <name>iminosuccinate</name>
        <dbReference type="ChEBI" id="CHEBI:77875"/>
    </ligand>
</feature>
<feature type="binding site" evidence="1">
    <location>
        <position position="113"/>
    </location>
    <ligand>
        <name>[4Fe-4S] cluster</name>
        <dbReference type="ChEBI" id="CHEBI:49883"/>
    </ligand>
</feature>
<feature type="binding site" evidence="1">
    <location>
        <begin position="139"/>
        <end position="141"/>
    </location>
    <ligand>
        <name>iminosuccinate</name>
        <dbReference type="ChEBI" id="CHEBI:77875"/>
    </ligand>
</feature>
<feature type="binding site" evidence="1">
    <location>
        <position position="156"/>
    </location>
    <ligand>
        <name>iminosuccinate</name>
        <dbReference type="ChEBI" id="CHEBI:77875"/>
    </ligand>
</feature>
<feature type="binding site" evidence="1">
    <location>
        <position position="200"/>
    </location>
    <ligand>
        <name>[4Fe-4S] cluster</name>
        <dbReference type="ChEBI" id="CHEBI:49883"/>
    </ligand>
</feature>
<feature type="binding site" evidence="1">
    <location>
        <begin position="226"/>
        <end position="228"/>
    </location>
    <ligand>
        <name>iminosuccinate</name>
        <dbReference type="ChEBI" id="CHEBI:77875"/>
    </ligand>
</feature>
<feature type="binding site" evidence="1">
    <location>
        <position position="243"/>
    </location>
    <ligand>
        <name>iminosuccinate</name>
        <dbReference type="ChEBI" id="CHEBI:77875"/>
    </ligand>
</feature>
<feature type="binding site" evidence="1">
    <location>
        <position position="297"/>
    </location>
    <ligand>
        <name>[4Fe-4S] cluster</name>
        <dbReference type="ChEBI" id="CHEBI:49883"/>
    </ligand>
</feature>
<evidence type="ECO:0000255" key="1">
    <source>
        <dbReference type="HAMAP-Rule" id="MF_00567"/>
    </source>
</evidence>
<reference key="1">
    <citation type="journal article" date="2009" name="PLoS Genet.">
        <title>Organised genome dynamics in the Escherichia coli species results in highly diverse adaptive paths.</title>
        <authorList>
            <person name="Touchon M."/>
            <person name="Hoede C."/>
            <person name="Tenaillon O."/>
            <person name="Barbe V."/>
            <person name="Baeriswyl S."/>
            <person name="Bidet P."/>
            <person name="Bingen E."/>
            <person name="Bonacorsi S."/>
            <person name="Bouchier C."/>
            <person name="Bouvet O."/>
            <person name="Calteau A."/>
            <person name="Chiapello H."/>
            <person name="Clermont O."/>
            <person name="Cruveiller S."/>
            <person name="Danchin A."/>
            <person name="Diard M."/>
            <person name="Dossat C."/>
            <person name="Karoui M.E."/>
            <person name="Frapy E."/>
            <person name="Garry L."/>
            <person name="Ghigo J.M."/>
            <person name="Gilles A.M."/>
            <person name="Johnson J."/>
            <person name="Le Bouguenec C."/>
            <person name="Lescat M."/>
            <person name="Mangenot S."/>
            <person name="Martinez-Jehanne V."/>
            <person name="Matic I."/>
            <person name="Nassif X."/>
            <person name="Oztas S."/>
            <person name="Petit M.A."/>
            <person name="Pichon C."/>
            <person name="Rouy Z."/>
            <person name="Ruf C.S."/>
            <person name="Schneider D."/>
            <person name="Tourret J."/>
            <person name="Vacherie B."/>
            <person name="Vallenet D."/>
            <person name="Medigue C."/>
            <person name="Rocha E.P.C."/>
            <person name="Denamur E."/>
        </authorList>
    </citation>
    <scope>NUCLEOTIDE SEQUENCE [LARGE SCALE GENOMIC DNA]</scope>
    <source>
        <strain>ATCC 35469 / DSM 13698 / BCRC 15582 / CCUG 18766 / IAM 14443 / JCM 21226 / LMG 7866 / NBRC 102419 / NCTC 12128 / CDC 0568-73</strain>
    </source>
</reference>
<dbReference type="EC" id="2.5.1.72" evidence="1"/>
<dbReference type="EMBL" id="CU928158">
    <property type="protein sequence ID" value="CAQ89860.1"/>
    <property type="molecule type" value="Genomic_DNA"/>
</dbReference>
<dbReference type="RefSeq" id="WP_000115316.1">
    <property type="nucleotide sequence ID" value="NC_011740.1"/>
</dbReference>
<dbReference type="SMR" id="B7LKL5"/>
<dbReference type="GeneID" id="75056612"/>
<dbReference type="KEGG" id="efe:EFER_2360"/>
<dbReference type="HOGENOM" id="CLU_047382_1_0_6"/>
<dbReference type="OrthoDB" id="9801204at2"/>
<dbReference type="UniPathway" id="UPA00253">
    <property type="reaction ID" value="UER00327"/>
</dbReference>
<dbReference type="Proteomes" id="UP000000745">
    <property type="component" value="Chromosome"/>
</dbReference>
<dbReference type="GO" id="GO:0005829">
    <property type="term" value="C:cytosol"/>
    <property type="evidence" value="ECO:0007669"/>
    <property type="project" value="TreeGrafter"/>
</dbReference>
<dbReference type="GO" id="GO:0051539">
    <property type="term" value="F:4 iron, 4 sulfur cluster binding"/>
    <property type="evidence" value="ECO:0007669"/>
    <property type="project" value="UniProtKB-KW"/>
</dbReference>
<dbReference type="GO" id="GO:0046872">
    <property type="term" value="F:metal ion binding"/>
    <property type="evidence" value="ECO:0007669"/>
    <property type="project" value="UniProtKB-KW"/>
</dbReference>
<dbReference type="GO" id="GO:0008987">
    <property type="term" value="F:quinolinate synthetase A activity"/>
    <property type="evidence" value="ECO:0007669"/>
    <property type="project" value="UniProtKB-UniRule"/>
</dbReference>
<dbReference type="GO" id="GO:0034628">
    <property type="term" value="P:'de novo' NAD biosynthetic process from L-aspartate"/>
    <property type="evidence" value="ECO:0007669"/>
    <property type="project" value="TreeGrafter"/>
</dbReference>
<dbReference type="FunFam" id="3.40.50.10800:FF:000001">
    <property type="entry name" value="Quinolinate synthase A"/>
    <property type="match status" value="1"/>
</dbReference>
<dbReference type="FunFam" id="3.40.50.10800:FF:000003">
    <property type="entry name" value="Quinolinate synthase A"/>
    <property type="match status" value="1"/>
</dbReference>
<dbReference type="Gene3D" id="3.40.50.10800">
    <property type="entry name" value="NadA-like"/>
    <property type="match status" value="3"/>
</dbReference>
<dbReference type="HAMAP" id="MF_00567">
    <property type="entry name" value="NadA_type1"/>
    <property type="match status" value="1"/>
</dbReference>
<dbReference type="InterPro" id="IPR003473">
    <property type="entry name" value="NadA"/>
</dbReference>
<dbReference type="InterPro" id="IPR036094">
    <property type="entry name" value="NadA_sf"/>
</dbReference>
<dbReference type="InterPro" id="IPR023513">
    <property type="entry name" value="Quinolinate_synth_A_type1"/>
</dbReference>
<dbReference type="NCBIfam" id="TIGR00550">
    <property type="entry name" value="nadA"/>
    <property type="match status" value="1"/>
</dbReference>
<dbReference type="NCBIfam" id="NF006877">
    <property type="entry name" value="PRK09375.1-1"/>
    <property type="match status" value="1"/>
</dbReference>
<dbReference type="NCBIfam" id="NF006878">
    <property type="entry name" value="PRK09375.1-2"/>
    <property type="match status" value="1"/>
</dbReference>
<dbReference type="PANTHER" id="PTHR30573:SF0">
    <property type="entry name" value="QUINOLINATE SYNTHASE, CHLOROPLASTIC"/>
    <property type="match status" value="1"/>
</dbReference>
<dbReference type="PANTHER" id="PTHR30573">
    <property type="entry name" value="QUINOLINATE SYNTHETASE A"/>
    <property type="match status" value="1"/>
</dbReference>
<dbReference type="Pfam" id="PF02445">
    <property type="entry name" value="NadA"/>
    <property type="match status" value="1"/>
</dbReference>
<dbReference type="SUPFAM" id="SSF142754">
    <property type="entry name" value="NadA-like"/>
    <property type="match status" value="1"/>
</dbReference>
<gene>
    <name evidence="1" type="primary">nadA</name>
    <name type="ordered locus">EFER_2360</name>
</gene>
<protein>
    <recommendedName>
        <fullName evidence="1">Quinolinate synthase</fullName>
        <ecNumber evidence="1">2.5.1.72</ecNumber>
    </recommendedName>
</protein>
<comment type="function">
    <text evidence="1">Catalyzes the condensation of iminoaspartate with dihydroxyacetone phosphate to form quinolinate.</text>
</comment>
<comment type="catalytic activity">
    <reaction evidence="1">
        <text>iminosuccinate + dihydroxyacetone phosphate = quinolinate + phosphate + 2 H2O + H(+)</text>
        <dbReference type="Rhea" id="RHEA:25888"/>
        <dbReference type="ChEBI" id="CHEBI:15377"/>
        <dbReference type="ChEBI" id="CHEBI:15378"/>
        <dbReference type="ChEBI" id="CHEBI:29959"/>
        <dbReference type="ChEBI" id="CHEBI:43474"/>
        <dbReference type="ChEBI" id="CHEBI:57642"/>
        <dbReference type="ChEBI" id="CHEBI:77875"/>
        <dbReference type="EC" id="2.5.1.72"/>
    </reaction>
    <physiologicalReaction direction="left-to-right" evidence="1">
        <dbReference type="Rhea" id="RHEA:25889"/>
    </physiologicalReaction>
</comment>
<comment type="cofactor">
    <cofactor evidence="1">
        <name>[4Fe-4S] cluster</name>
        <dbReference type="ChEBI" id="CHEBI:49883"/>
    </cofactor>
    <text evidence="1">Binds 1 [4Fe-4S] cluster per subunit.</text>
</comment>
<comment type="pathway">
    <text evidence="1">Cofactor biosynthesis; NAD(+) biosynthesis; quinolinate from iminoaspartate: step 1/1.</text>
</comment>
<comment type="subcellular location">
    <subcellularLocation>
        <location evidence="1">Cytoplasm</location>
    </subcellularLocation>
</comment>
<comment type="similarity">
    <text evidence="1">Belongs to the quinolinate synthase family. Type 1 subfamily.</text>
</comment>
<sequence>MSVMFDPDTAIYPFPTKPTPLSIDEKAYYREKIKRLLKERNAVMVAHYYTDPEIQQLAEETGGCISDSLEMARFGAKHPASTLLVAGVRFMGETAKILSPEKTILMPTLQAECSLDLGCPVDQFNAFCDAHPDRTVVVYANTSAVVKARADWVVTSSIAVELIDHLDSLGEKIIWAPDKHLGRYVQKQTGADILCWQGTCIVHDEFKTQALTRLQKQYPDAAILVHPESPQAIVDMADAVGSTSQLIAAAKTLPHQRLIVATDRGIFYKMQQAVPDKELLEAPTAGEGATCRSCAHCPWMAMNGLQAIAEALEQEESNYEVHVDERLRERALVPLNRMLDFAATLRG</sequence>
<accession>B7LKL5</accession>
<proteinExistence type="inferred from homology"/>
<keyword id="KW-0004">4Fe-4S</keyword>
<keyword id="KW-0963">Cytoplasm</keyword>
<keyword id="KW-0408">Iron</keyword>
<keyword id="KW-0411">Iron-sulfur</keyword>
<keyword id="KW-0479">Metal-binding</keyword>
<keyword id="KW-0662">Pyridine nucleotide biosynthesis</keyword>
<keyword id="KW-0808">Transferase</keyword>
<organism>
    <name type="scientific">Escherichia fergusonii (strain ATCC 35469 / DSM 13698 / CCUG 18766 / IAM 14443 / JCM 21226 / LMG 7866 / NBRC 102419 / NCTC 12128 / CDC 0568-73)</name>
    <dbReference type="NCBI Taxonomy" id="585054"/>
    <lineage>
        <taxon>Bacteria</taxon>
        <taxon>Pseudomonadati</taxon>
        <taxon>Pseudomonadota</taxon>
        <taxon>Gammaproteobacteria</taxon>
        <taxon>Enterobacterales</taxon>
        <taxon>Enterobacteriaceae</taxon>
        <taxon>Escherichia</taxon>
    </lineage>
</organism>